<reference key="1">
    <citation type="journal article" date="1997" name="Curr. Eye Res.">
        <title>Isolation of canine retinal arrestin cDNA and exclusion of three candidate genes for Swedish Briard retinal dystrophy.</title>
        <authorList>
            <person name="Veske A."/>
            <person name="Nafstroem K."/>
            <person name="Finckh U."/>
            <person name="Sargan D.R."/>
            <person name="Nilsson S.E.G."/>
            <person name="Gal A."/>
        </authorList>
    </citation>
    <scope>NUCLEOTIDE SEQUENCE [MRNA]</scope>
    <source>
        <strain>Beagle X Briard</strain>
        <tissue>Retina</tissue>
    </source>
</reference>
<reference key="2">
    <citation type="journal article" date="2002" name="BMC Genet.">
        <title>Screening of the arrestin gene in dogs afflicted with generalized progressive retinal atrophy.</title>
        <authorList>
            <person name="Dekomien G."/>
            <person name="Epplen J.T."/>
        </authorList>
    </citation>
    <scope>NUCLEOTIDE SEQUENCE [GENOMIC DNA]</scope>
    <scope>VARIANTS CYS-14; VAL-101; THR-103; TYR-257 AND GLU-377</scope>
</reference>
<protein>
    <recommendedName>
        <fullName>S-arrestin</fullName>
    </recommendedName>
    <alternativeName>
        <fullName>48 kDa protein</fullName>
    </alternativeName>
    <alternativeName>
        <fullName>Retinal S-antigen</fullName>
        <shortName>S-AG</shortName>
    </alternativeName>
    <alternativeName>
        <fullName>Rod photoreceptor arrestin</fullName>
    </alternativeName>
</protein>
<proteinExistence type="evidence at transcript level"/>
<comment type="function">
    <text evidence="4">Binds to photoactivated, phosphorylated RHO and terminates RHO signaling via G-proteins by competing with G-proteins for the same binding site on RHO. May play a role in preventing light-dependent degeneration of retinal photoreceptor cells.</text>
</comment>
<comment type="subunit">
    <text evidence="2">Monomer. Homodimer. Homotetramer. Interacts with RHO (via the phosphorylated C-terminus).</text>
</comment>
<comment type="subcellular location">
    <subcellularLocation>
        <location evidence="4">Cell projection</location>
        <location evidence="4">Cilium</location>
        <location evidence="4">Photoreceptor outer segment</location>
    </subcellularLocation>
    <subcellularLocation>
        <location evidence="4">Membrane</location>
        <topology evidence="4">Peripheral membrane protein</topology>
    </subcellularLocation>
    <text evidence="1 2">Highly expressed in photoreceptor outer segments in light-exposed retina. Evenly distributed throughout rod photoreceptor cells in dark-adapted retina (By similarity). Predominantly dectected at the proximal region of photoreceptor outer segments, near disk membranes.</text>
</comment>
<comment type="domain">
    <text evidence="1">The C-terminus interferes with binding to non-phosphorylated RHO. Interaction with phosphorylated RHO triggers displacement of the C-terminus and leads to a conformation change that mediates high-affinity RHO binding.</text>
</comment>
<comment type="disease">
    <text evidence="7">Defects in SAG may be the cause of generalized progressive retinal atrophy (gPRA) in some breeds.</text>
</comment>
<comment type="similarity">
    <text evidence="6">Belongs to the arrestin family.</text>
</comment>
<name>ARRS_CANLF</name>
<organism>
    <name type="scientific">Canis lupus familiaris</name>
    <name type="common">Dog</name>
    <name type="synonym">Canis familiaris</name>
    <dbReference type="NCBI Taxonomy" id="9615"/>
    <lineage>
        <taxon>Eukaryota</taxon>
        <taxon>Metazoa</taxon>
        <taxon>Chordata</taxon>
        <taxon>Craniata</taxon>
        <taxon>Vertebrata</taxon>
        <taxon>Euteleostomi</taxon>
        <taxon>Mammalia</taxon>
        <taxon>Eutheria</taxon>
        <taxon>Laurasiatheria</taxon>
        <taxon>Carnivora</taxon>
        <taxon>Caniformia</taxon>
        <taxon>Canidae</taxon>
        <taxon>Canis</taxon>
    </lineage>
</organism>
<keyword id="KW-0966">Cell projection</keyword>
<keyword id="KW-0472">Membrane</keyword>
<keyword id="KW-0597">Phosphoprotein</keyword>
<keyword id="KW-1185">Reference proteome</keyword>
<dbReference type="EMBL" id="X98460">
    <property type="protein sequence ID" value="CAA67100.1"/>
    <property type="molecule type" value="mRNA"/>
</dbReference>
<dbReference type="EMBL" id="AJ426068">
    <property type="protein sequence ID" value="CAD19827.1"/>
    <property type="molecule type" value="Genomic_DNA"/>
</dbReference>
<dbReference type="EMBL" id="AJ426069">
    <property type="protein sequence ID" value="CAD19827.1"/>
    <property type="status" value="JOINED"/>
    <property type="molecule type" value="Genomic_DNA"/>
</dbReference>
<dbReference type="EMBL" id="AJ426070">
    <property type="protein sequence ID" value="CAD19827.1"/>
    <property type="status" value="JOINED"/>
    <property type="molecule type" value="Genomic_DNA"/>
</dbReference>
<dbReference type="EMBL" id="AJ426071">
    <property type="protein sequence ID" value="CAD19827.1"/>
    <property type="status" value="JOINED"/>
    <property type="molecule type" value="Genomic_DNA"/>
</dbReference>
<dbReference type="EMBL" id="AJ426072">
    <property type="protein sequence ID" value="CAD19827.1"/>
    <property type="status" value="JOINED"/>
    <property type="molecule type" value="Genomic_DNA"/>
</dbReference>
<dbReference type="EMBL" id="AJ426073">
    <property type="protein sequence ID" value="CAD19827.1"/>
    <property type="status" value="JOINED"/>
    <property type="molecule type" value="Genomic_DNA"/>
</dbReference>
<dbReference type="EMBL" id="AJ426074">
    <property type="protein sequence ID" value="CAD19827.1"/>
    <property type="status" value="JOINED"/>
    <property type="molecule type" value="Genomic_DNA"/>
</dbReference>
<dbReference type="EMBL" id="AJ426075">
    <property type="protein sequence ID" value="CAD19827.1"/>
    <property type="status" value="JOINED"/>
    <property type="molecule type" value="Genomic_DNA"/>
</dbReference>
<dbReference type="EMBL" id="AJ426076">
    <property type="protein sequence ID" value="CAD19827.1"/>
    <property type="status" value="JOINED"/>
    <property type="molecule type" value="Genomic_DNA"/>
</dbReference>
<dbReference type="EMBL" id="AJ426077">
    <property type="protein sequence ID" value="CAD19827.1"/>
    <property type="status" value="JOINED"/>
    <property type="molecule type" value="Genomic_DNA"/>
</dbReference>
<dbReference type="EMBL" id="AJ426078">
    <property type="protein sequence ID" value="CAD19827.1"/>
    <property type="status" value="JOINED"/>
    <property type="molecule type" value="Genomic_DNA"/>
</dbReference>
<dbReference type="RefSeq" id="NP_001003230.1">
    <property type="nucleotide sequence ID" value="NM_001003230.1"/>
</dbReference>
<dbReference type="SMR" id="Q28281"/>
<dbReference type="FunCoup" id="Q28281">
    <property type="interactions" value="10"/>
</dbReference>
<dbReference type="STRING" id="9615.ENSCAFP00000017366"/>
<dbReference type="PaxDb" id="9612-ENSCAFP00000017366"/>
<dbReference type="GeneID" id="403906"/>
<dbReference type="KEGG" id="cfa:403906"/>
<dbReference type="CTD" id="6295"/>
<dbReference type="eggNOG" id="KOG3865">
    <property type="taxonomic scope" value="Eukaryota"/>
</dbReference>
<dbReference type="InParanoid" id="Q28281"/>
<dbReference type="OrthoDB" id="298939at2759"/>
<dbReference type="Proteomes" id="UP000002254">
    <property type="component" value="Unplaced"/>
</dbReference>
<dbReference type="Proteomes" id="UP000694429">
    <property type="component" value="Unplaced"/>
</dbReference>
<dbReference type="Proteomes" id="UP000694542">
    <property type="component" value="Unplaced"/>
</dbReference>
<dbReference type="Proteomes" id="UP000805418">
    <property type="component" value="Unplaced"/>
</dbReference>
<dbReference type="GO" id="GO:0016020">
    <property type="term" value="C:membrane"/>
    <property type="evidence" value="ECO:0007669"/>
    <property type="project" value="UniProtKB-SubCell"/>
</dbReference>
<dbReference type="GO" id="GO:0001917">
    <property type="term" value="C:photoreceptor inner segment"/>
    <property type="evidence" value="ECO:0000318"/>
    <property type="project" value="GO_Central"/>
</dbReference>
<dbReference type="GO" id="GO:0001750">
    <property type="term" value="C:photoreceptor outer segment"/>
    <property type="evidence" value="ECO:0000250"/>
    <property type="project" value="UniProtKB"/>
</dbReference>
<dbReference type="GO" id="GO:0001664">
    <property type="term" value="F:G protein-coupled receptor binding"/>
    <property type="evidence" value="ECO:0000318"/>
    <property type="project" value="GO_Central"/>
</dbReference>
<dbReference type="GO" id="GO:0002031">
    <property type="term" value="P:G protein-coupled receptor internalization"/>
    <property type="evidence" value="ECO:0000318"/>
    <property type="project" value="GO_Central"/>
</dbReference>
<dbReference type="GO" id="GO:0007165">
    <property type="term" value="P:signal transduction"/>
    <property type="evidence" value="ECO:0007669"/>
    <property type="project" value="InterPro"/>
</dbReference>
<dbReference type="FunFam" id="2.60.40.840:FF:000002">
    <property type="entry name" value="Arrestin 3"/>
    <property type="match status" value="1"/>
</dbReference>
<dbReference type="FunFam" id="2.60.40.640:FF:000011">
    <property type="entry name" value="S-arrestin isoform X2"/>
    <property type="match status" value="1"/>
</dbReference>
<dbReference type="Gene3D" id="2.60.40.640">
    <property type="match status" value="1"/>
</dbReference>
<dbReference type="Gene3D" id="2.60.40.840">
    <property type="match status" value="1"/>
</dbReference>
<dbReference type="InterPro" id="IPR000698">
    <property type="entry name" value="Arrestin"/>
</dbReference>
<dbReference type="InterPro" id="IPR014752">
    <property type="entry name" value="Arrestin-like_C"/>
</dbReference>
<dbReference type="InterPro" id="IPR011021">
    <property type="entry name" value="Arrestin-like_N"/>
</dbReference>
<dbReference type="InterPro" id="IPR011022">
    <property type="entry name" value="Arrestin_C-like"/>
</dbReference>
<dbReference type="InterPro" id="IPR017864">
    <property type="entry name" value="Arrestin_CS"/>
</dbReference>
<dbReference type="InterPro" id="IPR014753">
    <property type="entry name" value="Arrestin_N"/>
</dbReference>
<dbReference type="InterPro" id="IPR014756">
    <property type="entry name" value="Ig_E-set"/>
</dbReference>
<dbReference type="PANTHER" id="PTHR11792">
    <property type="entry name" value="ARRESTIN"/>
    <property type="match status" value="1"/>
</dbReference>
<dbReference type="PANTHER" id="PTHR11792:SF15">
    <property type="entry name" value="S-ARRESTIN"/>
    <property type="match status" value="1"/>
</dbReference>
<dbReference type="Pfam" id="PF02752">
    <property type="entry name" value="Arrestin_C"/>
    <property type="match status" value="1"/>
</dbReference>
<dbReference type="Pfam" id="PF00339">
    <property type="entry name" value="Arrestin_N"/>
    <property type="match status" value="1"/>
</dbReference>
<dbReference type="PRINTS" id="PR00309">
    <property type="entry name" value="ARRESTIN"/>
</dbReference>
<dbReference type="SMART" id="SM01017">
    <property type="entry name" value="Arrestin_C"/>
    <property type="match status" value="1"/>
</dbReference>
<dbReference type="SUPFAM" id="SSF81296">
    <property type="entry name" value="E set domains"/>
    <property type="match status" value="2"/>
</dbReference>
<dbReference type="PROSITE" id="PS00295">
    <property type="entry name" value="ARRESTINS"/>
    <property type="match status" value="1"/>
</dbReference>
<accession>Q28281</accession>
<sequence length="405" mass="45177">MAASGKTSKSASNHVIFKKISRDKSVTIYLGKRDYIDHVEQVEPVDGIVLVDPELVKGKKVYVSLTCAFRYGQEDIDVIGLSFRRDLYFSQVQVFPPVEAAGAPTKLQESLMKKLGGNTYPFLLTFPDYLPCSVMLQPAPQDMGKCCGVDFEVKAFARDSTEDEEDKVPKKSSVRLLIRKVQHAPSKMGPQPRAEAAWQFFMSDKPLHLAVSLSKEIYFHGEPITVTVTVTNNTEKTVKKIKALVEQVANVVLYSSDYYTKPVAQEETQEKVPPNSTLTTTLTLVPLLANNRERRGIALDGKIKHEDTNLASSTIIKEGIDRTVLGILVSYHIKVKLTVSGFLGELTSSEVATEVPFRLMHPQPEDPATAKESFQDANLVFEEFARQNLKDFAEEGKKDREAMDE</sequence>
<feature type="chain" id="PRO_0000205185" description="S-arrestin">
    <location>
        <begin position="1"/>
        <end position="405"/>
    </location>
</feature>
<feature type="modified residue" description="Phosphothreonine" evidence="3">
    <location>
        <position position="234"/>
    </location>
</feature>
<feature type="sequence variant" description="Requires 2 nucleotide substitutions." evidence="5">
    <original>H</original>
    <variation>C</variation>
    <location>
        <position position="14"/>
    </location>
</feature>
<feature type="sequence variant" evidence="5">
    <original>A</original>
    <variation>V</variation>
    <location>
        <position position="101"/>
    </location>
</feature>
<feature type="sequence variant" evidence="5">
    <original>A</original>
    <variation>T</variation>
    <location>
        <position position="103"/>
    </location>
</feature>
<feature type="sequence variant" evidence="5">
    <original>D</original>
    <variation>Y</variation>
    <location>
        <position position="257"/>
    </location>
</feature>
<feature type="sequence variant" evidence="5">
    <original>A</original>
    <variation>E</variation>
    <location>
        <position position="377"/>
    </location>
</feature>
<evidence type="ECO:0000250" key="1">
    <source>
        <dbReference type="UniProtKB" id="P08168"/>
    </source>
</evidence>
<evidence type="ECO:0000250" key="2">
    <source>
        <dbReference type="UniProtKB" id="P10523"/>
    </source>
</evidence>
<evidence type="ECO:0000250" key="3">
    <source>
        <dbReference type="UniProtKB" id="P15887"/>
    </source>
</evidence>
<evidence type="ECO:0000250" key="4">
    <source>
        <dbReference type="UniProtKB" id="P20443"/>
    </source>
</evidence>
<evidence type="ECO:0000269" key="5">
    <source>
    </source>
</evidence>
<evidence type="ECO:0000305" key="6"/>
<evidence type="ECO:0000305" key="7">
    <source>
    </source>
</evidence>
<gene>
    <name type="primary">SAG</name>
    <name type="synonym">ARR</name>
    <name type="synonym">SAG1</name>
</gene>